<sequence length="224" mass="25051">MVEYLVSLGADVRSNYDHAIKSAFENGHLQVIKYLISLGSDVSMHYDYILLRASRNGYIDVVKYLIEQGVDPRTNNDKAVRKASKNGRLEIVEYLVTLGADIRIDNDSAVRWASKNGHIKTVEFLVAKGADIRAKNDYSLRHSSKHGHIKMVEYLVAQGADVRADNDYAIKWASGKGHLEVVKYLVEKGADFRADNDCAVKWASQTGRVEIVEYLVSKGAVCPY</sequence>
<name>YR845_MIMIV</name>
<organism>
    <name type="scientific">Acanthamoeba polyphaga mimivirus</name>
    <name type="common">APMV</name>
    <dbReference type="NCBI Taxonomy" id="212035"/>
    <lineage>
        <taxon>Viruses</taxon>
        <taxon>Varidnaviria</taxon>
        <taxon>Bamfordvirae</taxon>
        <taxon>Nucleocytoviricota</taxon>
        <taxon>Megaviricetes</taxon>
        <taxon>Imitervirales</taxon>
        <taxon>Mimiviridae</taxon>
        <taxon>Megamimivirinae</taxon>
        <taxon>Mimivirus</taxon>
        <taxon>Mimivirus bradfordmassiliense</taxon>
    </lineage>
</organism>
<protein>
    <recommendedName>
        <fullName>Putative ankyrin repeat protein R845</fullName>
    </recommendedName>
</protein>
<organismHost>
    <name type="scientific">Acanthamoeba polyphaga</name>
    <name type="common">Amoeba</name>
    <dbReference type="NCBI Taxonomy" id="5757"/>
</organismHost>
<gene>
    <name type="ordered locus">MIMI_R845</name>
</gene>
<feature type="chain" id="PRO_0000067212" description="Putative ankyrin repeat protein R845">
    <location>
        <begin position="1"/>
        <end position="224"/>
    </location>
</feature>
<feature type="repeat" description="ANK 1">
    <location>
        <begin position="1"/>
        <end position="14"/>
    </location>
</feature>
<feature type="repeat" description="ANK 2">
    <location>
        <begin position="15"/>
        <end position="44"/>
    </location>
</feature>
<feature type="repeat" description="ANK 3">
    <location>
        <begin position="46"/>
        <end position="74"/>
    </location>
</feature>
<feature type="repeat" description="ANK 4">
    <location>
        <begin position="75"/>
        <end position="104"/>
    </location>
</feature>
<feature type="repeat" description="ANK 5">
    <location>
        <begin position="105"/>
        <end position="134"/>
    </location>
</feature>
<feature type="repeat" description="ANK 6">
    <location>
        <begin position="136"/>
        <end position="164"/>
    </location>
</feature>
<feature type="repeat" description="ANK 7">
    <location>
        <begin position="165"/>
        <end position="194"/>
    </location>
</feature>
<feature type="repeat" description="ANK 8">
    <location>
        <begin position="196"/>
        <end position="224"/>
    </location>
</feature>
<dbReference type="EMBL" id="AY653733">
    <property type="protein sequence ID" value="AAV51103.1"/>
    <property type="molecule type" value="Genomic_DNA"/>
</dbReference>
<dbReference type="SMR" id="Q5UP14"/>
<dbReference type="Proteomes" id="UP000001134">
    <property type="component" value="Genome"/>
</dbReference>
<dbReference type="Gene3D" id="1.25.40.20">
    <property type="entry name" value="Ankyrin repeat-containing domain"/>
    <property type="match status" value="3"/>
</dbReference>
<dbReference type="InterPro" id="IPR002110">
    <property type="entry name" value="Ankyrin_rpt"/>
</dbReference>
<dbReference type="InterPro" id="IPR036770">
    <property type="entry name" value="Ankyrin_rpt-contain_sf"/>
</dbReference>
<dbReference type="PANTHER" id="PTHR44207:SF1">
    <property type="entry name" value="SURFACE ANTIGEN BSPA-LIKE"/>
    <property type="match status" value="1"/>
</dbReference>
<dbReference type="PANTHER" id="PTHR44207">
    <property type="entry name" value="SURFACE ANTIGEN BSPA-LIKE-RELATED"/>
    <property type="match status" value="1"/>
</dbReference>
<dbReference type="Pfam" id="PF12796">
    <property type="entry name" value="Ank_2"/>
    <property type="match status" value="2"/>
</dbReference>
<dbReference type="SMART" id="SM00248">
    <property type="entry name" value="ANK"/>
    <property type="match status" value="7"/>
</dbReference>
<dbReference type="SUPFAM" id="SSF48403">
    <property type="entry name" value="Ankyrin repeat"/>
    <property type="match status" value="1"/>
</dbReference>
<dbReference type="PROSITE" id="PS50297">
    <property type="entry name" value="ANK_REP_REGION"/>
    <property type="match status" value="2"/>
</dbReference>
<dbReference type="PROSITE" id="PS50088">
    <property type="entry name" value="ANK_REPEAT"/>
    <property type="match status" value="5"/>
</dbReference>
<reference key="1">
    <citation type="journal article" date="2004" name="Science">
        <title>The 1.2-megabase genome sequence of Mimivirus.</title>
        <authorList>
            <person name="Raoult D."/>
            <person name="Audic S."/>
            <person name="Robert C."/>
            <person name="Abergel C."/>
            <person name="Renesto P."/>
            <person name="Ogata H."/>
            <person name="La Scola B."/>
            <person name="Susan M."/>
            <person name="Claverie J.-M."/>
        </authorList>
    </citation>
    <scope>NUCLEOTIDE SEQUENCE [LARGE SCALE GENOMIC DNA]</scope>
    <source>
        <strain>Rowbotham-Bradford</strain>
    </source>
</reference>
<accession>Q5UP14</accession>
<proteinExistence type="predicted"/>
<keyword id="KW-0040">ANK repeat</keyword>
<keyword id="KW-1185">Reference proteome</keyword>
<keyword id="KW-0677">Repeat</keyword>